<comment type="function">
    <text evidence="1 2 3 4 5">F-actin-capping proteins bind in a Ca(2+)-independent manner to the fast growing ends of actin filaments (barbed end) thereby blocking the exchange of subunits at these ends. Unlike other capping proteins (such as gelsolin and severin), these proteins do not sever actin filaments. Plays a role in the regulation of cell morphology and cytoskeletal organization (By similarity). Forms, with CAPZB, the barbed end of the fast growing ends of actin filaments in the dynactin complex and stabilizes dynactin structure. The dynactin multiprotein complex activates the molecular motor dynein for ultra-processive transport along microtubules (PubMed:25814576, PubMed:29420470, PubMed:33734450, PubMed:36071160). Plays a role in the regulation of cell morphology and cytoskeletal organization (By similarity).</text>
</comment>
<comment type="subunit">
    <text evidence="1 3 4 5">Component of the F-actin capping complex, composed of a heterodimer of an alpha and a beta subunit (PubMed:29420470, PubMed:33734450, PubMed:36071160). Subunit of dynactin, a multiprotein complex part of a tripartite complex with dynein and a adapter, such as BICDL1, BICD2 or HOOK3 (PubMed:33734450, PubMed:36071160). The dynactin complex is built around ACTR1A/ACTB filament and consists of an actin-related filament composed of a shoulder domain, a pointed end and a barbed end. Its length is defined by its flexible shoulder domain. The soulder is composed of 2 DCTN1 subunits, 4 DCTN2 and 2 DCTN3. The 4 DCNT2 (via N-terminus) bind the ACTR1A filament and act as molecular rulers to determine the length. The pointed end is important for binding dynein-dynactin cargo adapters. Consists of 4 subunits: ACTR10, DCNT4, DCTN5 and DCTN6 (PubMed:33734450). The barbed end is composed of a CAPZA1:CAPZB heterodimers, which binds ACTR1A/ACTB filament and dynactin and stabilizes dynactin (PubMed:33734450, PubMed:36071160). Interacts with ARHGAP17. Interaction with RCSD1/CAPZIP. Component of the WASH complex, composed of F-actin-capping protein subunit alpha (CAPZA1, CAPZA2 or CAPZA3), F-actin-capping protein subunit beta (CAPZB), WASH (WASHC1, WASH2P, WASH3P, WASH4P, WASH5P or WASH6P), WASHC2 (WASHC2A or WASHC2C), WASHC3, WASHC4 and WASHC5. Interacts with ACTG1. Directly interacts with CRACD; this interaction decreases binding to actin (By similarity).</text>
</comment>
<comment type="subcellular location">
    <subcellularLocation>
        <location evidence="7">Cytoplasm</location>
        <location evidence="7">Cytoskeleton</location>
    </subcellularLocation>
    <subcellularLocation>
        <location evidence="6">Cytoplasm</location>
        <location evidence="6">Myofibril</location>
        <location evidence="6">Sarcomere</location>
    </subcellularLocation>
</comment>
<comment type="alternative products">
    <event type="alternative splicing"/>
    <isoform>
        <id>A0PFK7-2</id>
        <name>1</name>
        <sequence type="displayed"/>
    </isoform>
    <isoform>
        <id>A0PFK7-1</id>
        <name>2</name>
        <sequence type="described" ref="VSP_061775"/>
    </isoform>
</comment>
<comment type="similarity">
    <text evidence="6">Belongs to the F-actin-capping protein beta subunit family.</text>
</comment>
<evidence type="ECO:0000250" key="1">
    <source>
        <dbReference type="UniProtKB" id="P47756"/>
    </source>
</evidence>
<evidence type="ECO:0000269" key="2">
    <source>
    </source>
</evidence>
<evidence type="ECO:0000269" key="3">
    <source>
    </source>
</evidence>
<evidence type="ECO:0000269" key="4">
    <source>
    </source>
</evidence>
<evidence type="ECO:0000269" key="5">
    <source>
    </source>
</evidence>
<evidence type="ECO:0000305" key="6"/>
<evidence type="ECO:0000305" key="7">
    <source>
    </source>
</evidence>
<evidence type="ECO:0000312" key="8">
    <source>
        <dbReference type="EMBL" id="ABQ96220.1"/>
    </source>
</evidence>
<evidence type="ECO:0000312" key="9">
    <source>
        <dbReference type="EMBL" id="AGO58802.1"/>
    </source>
</evidence>
<evidence type="ECO:0000312" key="10">
    <source>
        <dbReference type="EMBL" id="HDB06988.1"/>
    </source>
</evidence>
<evidence type="ECO:0000312" key="11">
    <source>
        <dbReference type="Proteomes" id="UP000008227"/>
    </source>
</evidence>
<evidence type="ECO:0007744" key="12">
    <source>
        <dbReference type="PDB" id="5ADX"/>
    </source>
</evidence>
<evidence type="ECO:0007744" key="13">
    <source>
        <dbReference type="PDB" id="5AFU"/>
    </source>
</evidence>
<evidence type="ECO:0007744" key="14">
    <source>
        <dbReference type="PDB" id="6F1T"/>
    </source>
</evidence>
<evidence type="ECO:0007744" key="15">
    <source>
        <dbReference type="PDB" id="6F1U"/>
    </source>
</evidence>
<evidence type="ECO:0007744" key="16">
    <source>
        <dbReference type="PDB" id="6ZNL"/>
    </source>
</evidence>
<evidence type="ECO:0007744" key="17">
    <source>
        <dbReference type="PDB" id="7Z8F"/>
    </source>
</evidence>
<evidence type="ECO:0007744" key="18">
    <source>
        <dbReference type="PDB" id="7Z8I"/>
    </source>
</evidence>
<evidence type="ECO:0007829" key="19">
    <source>
        <dbReference type="PDB" id="6F1U"/>
    </source>
</evidence>
<evidence type="ECO:0007829" key="20">
    <source>
        <dbReference type="PDB" id="7Z8I"/>
    </source>
</evidence>
<gene>
    <name type="primary">CAPZB</name>
</gene>
<accession>A0PFK7</accession>
<accession>A0A286ZU64</accession>
<accession>A9XFX6</accession>
<accession>F1SUN9</accession>
<feature type="initiator methionine" description="Removed" evidence="1">
    <location>
        <position position="1"/>
    </location>
</feature>
<feature type="chain" id="PRO_0000457459" description="F-actin-capping protein subunit beta" evidence="1">
    <location>
        <begin position="2"/>
        <end position="272"/>
    </location>
</feature>
<feature type="modified residue" description="N6-acetyllysine" evidence="1">
    <location>
        <position position="235"/>
    </location>
</feature>
<feature type="splice variant" id="VSP_061775" description="In isoform 2.">
    <original>VQTFADKSKQEALKNDLVEALKRKQQC</original>
    <variation>LDAIPDNHKFKQLQRELSQVLTQRQVYIQPDN</variation>
    <location>
        <begin position="246"/>
        <end position="272"/>
    </location>
</feature>
<feature type="sequence conflict" description="In Ref. 1; CAL69437." evidence="6" ref="1">
    <original>S</original>
    <variation>G</variation>
    <location>
        <position position="2"/>
    </location>
</feature>
<feature type="helix" evidence="20">
    <location>
        <begin position="3"/>
        <end position="15"/>
    </location>
</feature>
<feature type="helix" evidence="20">
    <location>
        <begin position="21"/>
        <end position="29"/>
    </location>
</feature>
<feature type="helix" evidence="20">
    <location>
        <begin position="33"/>
        <end position="35"/>
    </location>
</feature>
<feature type="helix" evidence="20">
    <location>
        <begin position="36"/>
        <end position="42"/>
    </location>
</feature>
<feature type="strand" evidence="20">
    <location>
        <begin position="48"/>
        <end position="52"/>
    </location>
</feature>
<feature type="turn" evidence="20">
    <location>
        <begin position="53"/>
        <end position="56"/>
    </location>
</feature>
<feature type="strand" evidence="20">
    <location>
        <begin position="57"/>
        <end position="61"/>
    </location>
</feature>
<feature type="strand" evidence="20">
    <location>
        <begin position="63"/>
        <end position="66"/>
    </location>
</feature>
<feature type="strand" evidence="19">
    <location>
        <begin position="70"/>
        <end position="72"/>
    </location>
</feature>
<feature type="strand" evidence="20">
    <location>
        <begin position="74"/>
        <end position="76"/>
    </location>
</feature>
<feature type="strand" evidence="20">
    <location>
        <begin position="78"/>
        <end position="81"/>
    </location>
</feature>
<feature type="helix" evidence="20">
    <location>
        <begin position="92"/>
        <end position="111"/>
    </location>
</feature>
<feature type="strand" evidence="20">
    <location>
        <begin position="113"/>
        <end position="124"/>
    </location>
</feature>
<feature type="strand" evidence="20">
    <location>
        <begin position="127"/>
        <end position="137"/>
    </location>
</feature>
<feature type="strand" evidence="19">
    <location>
        <begin position="140"/>
        <end position="143"/>
    </location>
</feature>
<feature type="strand" evidence="20">
    <location>
        <begin position="145"/>
        <end position="158"/>
    </location>
</feature>
<feature type="strand" evidence="20">
    <location>
        <begin position="162"/>
        <end position="179"/>
    </location>
</feature>
<feature type="turn" evidence="20">
    <location>
        <begin position="182"/>
        <end position="184"/>
    </location>
</feature>
<feature type="strand" evidence="20">
    <location>
        <begin position="187"/>
        <end position="202"/>
    </location>
</feature>
<feature type="strand" evidence="20">
    <location>
        <begin position="205"/>
        <end position="207"/>
    </location>
</feature>
<feature type="helix" evidence="20">
    <location>
        <begin position="209"/>
        <end position="243"/>
    </location>
</feature>
<feature type="helix" evidence="20">
    <location>
        <begin position="249"/>
        <end position="268"/>
    </location>
</feature>
<feature type="modified residue" description="Phosphoserine" evidence="1">
    <location sequence="A0PFK7-1">
        <position position="263"/>
    </location>
</feature>
<dbReference type="EMBL" id="AM410996">
    <property type="protein sequence ID" value="CAL69437.1"/>
    <property type="molecule type" value="mRNA"/>
</dbReference>
<dbReference type="EMBL" id="DQIR01312228">
    <property type="protein sequence ID" value="HDC67706.1"/>
    <property type="molecule type" value="Transcribed_RNA"/>
</dbReference>
<dbReference type="EMBL" id="EF202986">
    <property type="protein sequence ID" value="ABQ96220.1"/>
    <property type="molecule type" value="mRNA"/>
</dbReference>
<dbReference type="EMBL" id="JX569751">
    <property type="protein sequence ID" value="AGO58802.1"/>
    <property type="molecule type" value="mRNA"/>
</dbReference>
<dbReference type="EMBL" id="EF202989">
    <property type="protein sequence ID" value="ABQ96223.1"/>
    <property type="molecule type" value="Genomic_DNA"/>
</dbReference>
<dbReference type="EMBL" id="JX966416">
    <property type="protein sequence ID" value="AGO58807.1"/>
    <property type="molecule type" value="mRNA"/>
</dbReference>
<dbReference type="EMBL" id="DQIR01151511">
    <property type="protein sequence ID" value="HDB06988.1"/>
    <property type="molecule type" value="Transcribed_RNA"/>
</dbReference>
<dbReference type="EMBL" id="DQIR01250994">
    <property type="protein sequence ID" value="HDC06472.1"/>
    <property type="molecule type" value="Transcribed_RNA"/>
</dbReference>
<dbReference type="EMBL" id="DQIR01207860">
    <property type="protein sequence ID" value="HDB63337.1"/>
    <property type="molecule type" value="Transcribed_RNA"/>
</dbReference>
<dbReference type="EMBL" id="DQIR01255040">
    <property type="protein sequence ID" value="HDC10518.1"/>
    <property type="molecule type" value="Transcribed_RNA"/>
</dbReference>
<dbReference type="EMBL" id="DQIR01297729">
    <property type="protein sequence ID" value="HDC53207.1"/>
    <property type="molecule type" value="Transcribed_RNA"/>
</dbReference>
<dbReference type="EMBL" id="AEMK02000045">
    <property type="status" value="NOT_ANNOTATED_CDS"/>
    <property type="molecule type" value="Genomic_DNA"/>
</dbReference>
<dbReference type="RefSeq" id="NP_001090925.1">
    <property type="nucleotide sequence ID" value="NM_001097456.1"/>
</dbReference>
<dbReference type="RefSeq" id="NP_001106915.1">
    <molecule id="A0PFK7-2"/>
    <property type="nucleotide sequence ID" value="NM_001113444.2"/>
</dbReference>
<dbReference type="PDB" id="5ADX">
    <property type="method" value="EM"/>
    <property type="resolution" value="4.00 A"/>
    <property type="chains" value="L=2-271"/>
</dbReference>
<dbReference type="PDB" id="5AFU">
    <property type="method" value="EM"/>
    <property type="resolution" value="3.50 A"/>
    <property type="chains" value="L=2-271"/>
</dbReference>
<dbReference type="PDB" id="6F1T">
    <property type="method" value="EM"/>
    <property type="resolution" value="3.50 A"/>
    <property type="chains" value="L=1-272"/>
</dbReference>
<dbReference type="PDB" id="6F1U">
    <property type="method" value="EM"/>
    <property type="resolution" value="3.40 A"/>
    <property type="chains" value="L=1-271"/>
</dbReference>
<dbReference type="PDB" id="6F38">
    <property type="method" value="EM"/>
    <property type="resolution" value="6.70 A"/>
    <property type="chains" value="L=1-272"/>
</dbReference>
<dbReference type="PDB" id="6F3A">
    <property type="method" value="EM"/>
    <property type="resolution" value="8.20 A"/>
    <property type="chains" value="L=1-272"/>
</dbReference>
<dbReference type="PDB" id="6ZNL">
    <property type="method" value="EM"/>
    <property type="resolution" value="3.80 A"/>
    <property type="chains" value="L=1-272"/>
</dbReference>
<dbReference type="PDB" id="7Z8F">
    <property type="method" value="EM"/>
    <property type="resolution" value="20.00 A"/>
    <property type="chains" value="L=1-272"/>
</dbReference>
<dbReference type="PDB" id="7Z8I">
    <property type="method" value="EM"/>
    <property type="resolution" value="3.30 A"/>
    <property type="chains" value="L=1-272"/>
</dbReference>
<dbReference type="PDB" id="8PTK">
    <property type="method" value="EM"/>
    <property type="resolution" value="10.00 A"/>
    <property type="chains" value="L=1-272"/>
</dbReference>
<dbReference type="PDBsum" id="5ADX"/>
<dbReference type="PDBsum" id="5AFU"/>
<dbReference type="PDBsum" id="6F1T"/>
<dbReference type="PDBsum" id="6F1U"/>
<dbReference type="PDBsum" id="6F38"/>
<dbReference type="PDBsum" id="6F3A"/>
<dbReference type="PDBsum" id="6ZNL"/>
<dbReference type="PDBsum" id="7Z8F"/>
<dbReference type="PDBsum" id="7Z8I"/>
<dbReference type="PDBsum" id="8PTK"/>
<dbReference type="EMDB" id="EMD-11313"/>
<dbReference type="EMDB" id="EMD-14549"/>
<dbReference type="EMDB" id="EMD-14552"/>
<dbReference type="EMDB" id="EMD-17873"/>
<dbReference type="EMDB" id="EMD-2856"/>
<dbReference type="EMDB" id="EMD-2857"/>
<dbReference type="EMDB" id="EMD-4168"/>
<dbReference type="EMDB" id="EMD-4169"/>
<dbReference type="EMDB" id="EMD-4177"/>
<dbReference type="SMR" id="A0PFK7"/>
<dbReference type="FunCoup" id="A0PFK7">
    <property type="interactions" value="2329"/>
</dbReference>
<dbReference type="STRING" id="9823.ENSSSCP00000003793"/>
<dbReference type="PaxDb" id="9823-ENSSSCP00000003793"/>
<dbReference type="PeptideAtlas" id="A0PFK7"/>
<dbReference type="PRIDE" id="A9XFX6"/>
<dbReference type="Ensembl" id="ENSSSCT00105009053">
    <molecule id="A0PFK7-2"/>
    <property type="protein sequence ID" value="ENSSSCP00105006578"/>
    <property type="gene ID" value="ENSSSCG00105004512"/>
</dbReference>
<dbReference type="Ensembl" id="ENSSSCT00110057258">
    <molecule id="A0PFK7-2"/>
    <property type="protein sequence ID" value="ENSSSCP00110039839"/>
    <property type="gene ID" value="ENSSSCG00110029935"/>
</dbReference>
<dbReference type="Ensembl" id="ENSSSCT00115039169">
    <molecule id="A0PFK7-2"/>
    <property type="protein sequence ID" value="ENSSSCP00115036942"/>
    <property type="gene ID" value="ENSSSCG00115022067"/>
</dbReference>
<dbReference type="Ensembl" id="ENSSSCT00130065939">
    <molecule id="A0PFK7-2"/>
    <property type="protein sequence ID" value="ENSSSCP00130047274"/>
    <property type="gene ID" value="ENSSSCG00130033381"/>
</dbReference>
<dbReference type="Ensembl" id="ENSSSCT00130065992">
    <molecule id="A0PFK7-2"/>
    <property type="protein sequence ID" value="ENSSSCP00130047306"/>
    <property type="gene ID" value="ENSSSCG00130033381"/>
</dbReference>
<dbReference type="GeneID" id="100134958"/>
<dbReference type="KEGG" id="ssc:100134958"/>
<dbReference type="CTD" id="832"/>
<dbReference type="eggNOG" id="KOG3174">
    <property type="taxonomic scope" value="Eukaryota"/>
</dbReference>
<dbReference type="HOGENOM" id="CLU_045864_1_1_1"/>
<dbReference type="InParanoid" id="A0PFK7"/>
<dbReference type="OMA" id="WSNKYYP"/>
<dbReference type="OrthoDB" id="9979678at2759"/>
<dbReference type="Reactome" id="R-SSC-2132295">
    <property type="pathway name" value="MHC class II antigen presentation"/>
</dbReference>
<dbReference type="Reactome" id="R-SSC-3371497">
    <property type="pathway name" value="HSP90 chaperone cycle for steroid hormone receptors (SHR) in the presence of ligand"/>
</dbReference>
<dbReference type="Reactome" id="R-SSC-6807878">
    <property type="pathway name" value="COPI-mediated anterograde transport"/>
</dbReference>
<dbReference type="Reactome" id="R-SSC-9013405">
    <property type="pathway name" value="RHOD GTPase cycle"/>
</dbReference>
<dbReference type="Reactome" id="R-SSC-9035034">
    <property type="pathway name" value="RHOF GTPase cycle"/>
</dbReference>
<dbReference type="Reactome" id="R-SSC-983231">
    <property type="pathway name" value="Factors involved in megakaryocyte development and platelet production"/>
</dbReference>
<dbReference type="Proteomes" id="UP000008227">
    <property type="component" value="Chromosome 6"/>
</dbReference>
<dbReference type="Proteomes" id="UP000314985">
    <property type="component" value="Unplaced"/>
</dbReference>
<dbReference type="Proteomes" id="UP000694570">
    <property type="component" value="Unplaced"/>
</dbReference>
<dbReference type="Proteomes" id="UP000694571">
    <property type="component" value="Unplaced"/>
</dbReference>
<dbReference type="Proteomes" id="UP000694720">
    <property type="component" value="Unplaced"/>
</dbReference>
<dbReference type="Proteomes" id="UP000694722">
    <property type="component" value="Unplaced"/>
</dbReference>
<dbReference type="Proteomes" id="UP000694723">
    <property type="component" value="Unplaced"/>
</dbReference>
<dbReference type="Proteomes" id="UP000694724">
    <property type="component" value="Unplaced"/>
</dbReference>
<dbReference type="Proteomes" id="UP000694725">
    <property type="component" value="Unplaced"/>
</dbReference>
<dbReference type="Proteomes" id="UP000694726">
    <property type="component" value="Unplaced"/>
</dbReference>
<dbReference type="Proteomes" id="UP000694727">
    <property type="component" value="Unplaced"/>
</dbReference>
<dbReference type="Proteomes" id="UP000694728">
    <property type="component" value="Unplaced"/>
</dbReference>
<dbReference type="Bgee" id="ENSSSCG00000003493">
    <property type="expression patterns" value="Expressed in granulosa cell and 43 other cell types or tissues"/>
</dbReference>
<dbReference type="GO" id="GO:0008290">
    <property type="term" value="C:F-actin capping protein complex"/>
    <property type="evidence" value="ECO:0007669"/>
    <property type="project" value="InterPro"/>
</dbReference>
<dbReference type="GO" id="GO:0030017">
    <property type="term" value="C:sarcomere"/>
    <property type="evidence" value="ECO:0007669"/>
    <property type="project" value="UniProtKB-SubCell"/>
</dbReference>
<dbReference type="GO" id="GO:0071203">
    <property type="term" value="C:WASH complex"/>
    <property type="evidence" value="ECO:0000250"/>
    <property type="project" value="UniProtKB"/>
</dbReference>
<dbReference type="GO" id="GO:0003779">
    <property type="term" value="F:actin binding"/>
    <property type="evidence" value="ECO:0000250"/>
    <property type="project" value="UniProtKB"/>
</dbReference>
<dbReference type="GO" id="GO:0030036">
    <property type="term" value="P:actin cytoskeleton organization"/>
    <property type="evidence" value="ECO:0007669"/>
    <property type="project" value="InterPro"/>
</dbReference>
<dbReference type="GO" id="GO:0051016">
    <property type="term" value="P:barbed-end actin filament capping"/>
    <property type="evidence" value="ECO:0007669"/>
    <property type="project" value="InterPro"/>
</dbReference>
<dbReference type="GO" id="GO:0007010">
    <property type="term" value="P:cytoskeleton organization"/>
    <property type="evidence" value="ECO:0000250"/>
    <property type="project" value="UniProtKB"/>
</dbReference>
<dbReference type="GO" id="GO:0022604">
    <property type="term" value="P:regulation of cell morphogenesis"/>
    <property type="evidence" value="ECO:0000250"/>
    <property type="project" value="UniProtKB"/>
</dbReference>
<dbReference type="FunFam" id="1.20.58.570:FF:000001">
    <property type="entry name" value="F-actin-capping protein subunit beta"/>
    <property type="match status" value="1"/>
</dbReference>
<dbReference type="FunFam" id="3.90.1150.210:FF:000001">
    <property type="entry name" value="F-actin-capping protein subunit beta"/>
    <property type="match status" value="1"/>
</dbReference>
<dbReference type="Gene3D" id="1.20.58.570">
    <property type="match status" value="1"/>
</dbReference>
<dbReference type="Gene3D" id="3.90.1150.210">
    <property type="entry name" value="F-actin capping protein, beta subunit"/>
    <property type="match status" value="1"/>
</dbReference>
<dbReference type="InterPro" id="IPR037282">
    <property type="entry name" value="CapZ_alpha/beta"/>
</dbReference>
<dbReference type="InterPro" id="IPR042276">
    <property type="entry name" value="CapZ_alpha/beta_2"/>
</dbReference>
<dbReference type="InterPro" id="IPR001698">
    <property type="entry name" value="CAPZB"/>
</dbReference>
<dbReference type="InterPro" id="IPR043175">
    <property type="entry name" value="CAPZB_N"/>
</dbReference>
<dbReference type="InterPro" id="IPR019771">
    <property type="entry name" value="F-actin_capping_bsu_CS"/>
</dbReference>
<dbReference type="PANTHER" id="PTHR10619">
    <property type="entry name" value="F-ACTIN-CAPPING PROTEIN SUBUNIT BETA"/>
    <property type="match status" value="1"/>
</dbReference>
<dbReference type="PANTHER" id="PTHR10619:SF1">
    <property type="entry name" value="F-ACTIN-CAPPING PROTEIN SUBUNIT BETA"/>
    <property type="match status" value="1"/>
</dbReference>
<dbReference type="Pfam" id="PF01115">
    <property type="entry name" value="F_actin_cap_B"/>
    <property type="match status" value="1"/>
</dbReference>
<dbReference type="PRINTS" id="PR00192">
    <property type="entry name" value="FACTINCAPB"/>
</dbReference>
<dbReference type="SUPFAM" id="SSF90096">
    <property type="entry name" value="Subunits of heterodimeric actin filament capping protein Capz"/>
    <property type="match status" value="1"/>
</dbReference>
<dbReference type="PROSITE" id="PS00231">
    <property type="entry name" value="F_ACTIN_CAPPING_BETA"/>
    <property type="match status" value="1"/>
</dbReference>
<reference key="1">
    <citation type="submission" date="2006-09" db="EMBL/GenBank/DDBJ databases">
        <title>Actin binding activities of individual CapZ-subunit isoforms and their interaction with smooth muscle a-actinin.</title>
        <authorList>
            <person name="Glenz M.H."/>
            <person name="Hinssen H."/>
        </authorList>
    </citation>
    <scope>NUCLEOTIDE SEQUENCE [MRNA] (ISOFORM 2)</scope>
</reference>
<reference evidence="8" key="2">
    <citation type="journal article" date="2008" name="Biochem. Genet.">
        <title>Sequence characterization, polymorphism, and chromosomal localizations of the porcine CapZ genes.</title>
        <authorList>
            <person name="Yang E."/>
            <person name="Wang H."/>
            <person name="Wu X.X."/>
            <person name="Tang Z.L."/>
            <person name="Yang S.L."/>
            <person name="Li K."/>
        </authorList>
    </citation>
    <scope>NUCLEOTIDE SEQUENCE [MRNA] (ISOFORM 1)</scope>
</reference>
<reference evidence="9" key="3">
    <citation type="journal article" date="2014" name="Gene">
        <title>Identification and characterization of a differentially expressed protein (CAPZB) in skeletal muscle between Meishan and Large White pigs.</title>
        <authorList>
            <person name="Wang L."/>
            <person name="Xu Y."/>
            <person name="Wang Y."/>
            <person name="Zhong T."/>
            <person name="Tang G."/>
            <person name="Li L."/>
            <person name="Zhang H."/>
            <person name="Xiong Y."/>
        </authorList>
    </citation>
    <scope>NUCLEOTIDE SEQUENCE [MRNA] (ISOFORM 1)</scope>
    <source>
        <tissue evidence="9">Skeletal muscle</tissue>
    </source>
</reference>
<reference evidence="11" key="4">
    <citation type="submission" date="2009-11" db="EMBL/GenBank/DDBJ databases">
        <authorList>
            <consortium name="Porcine genome sequencing project"/>
        </authorList>
    </citation>
    <scope>NUCLEOTIDE SEQUENCE [LARGE SCALE GENOMIC DNA] (ISOFORM 1)</scope>
    <source>
        <strain evidence="11">Duroc</strain>
    </source>
</reference>
<reference evidence="10" key="5">
    <citation type="journal article" date="2019" name="PeerJ">
        <title>Genes of the pig, Sus scrofa, reconstructed with EvidentialGene.</title>
        <authorList>
            <person name="Gilbert D.G."/>
        </authorList>
    </citation>
    <scope>NUCLEOTIDE SEQUENCE [LARGE SCALE MRNA] (ISOFORM 1)</scope>
    <scope>SUBUNIT</scope>
</reference>
<reference evidence="12 13" key="6">
    <citation type="journal article" date="2015" name="Science">
        <title>The structure of the dynactin complex and its interaction with dynein.</title>
        <authorList>
            <person name="Urnavicius L."/>
            <person name="Zhang K."/>
            <person name="Diamant A.G."/>
            <person name="Motz C."/>
            <person name="Schlager M.A."/>
            <person name="Yu M."/>
            <person name="Patel N.A."/>
            <person name="Robinson C.V."/>
            <person name="Carter A.P."/>
        </authorList>
    </citation>
    <scope>STRUCTURE BY ELECTRON MICROSCOPY (3.50 ANGSTROMS) OF 2-271(ISOFORM 1)</scope>
</reference>
<reference evidence="14 15" key="7">
    <citation type="journal article" date="2018" name="Nature">
        <title>Cryo-EM shows how dynactin recruits two dyneins for faster movement.</title>
        <authorList>
            <person name="Urnavicius L."/>
            <person name="Lau C.K."/>
            <person name="Elshenawy M.M."/>
            <person name="Morales-Rios E."/>
            <person name="Motz C."/>
            <person name="Yildiz A."/>
            <person name="Carter A.P."/>
        </authorList>
    </citation>
    <scope>STRUCTURE BY ELECTRON MICROSCOPY (3.40 ANGSTROMS) OF 1-271(ISOFORM 1)</scope>
    <scope>SUBUNIT</scope>
</reference>
<reference evidence="16" key="8">
    <citation type="journal article" date="2021" name="EMBO J.">
        <title>Cryo-EM reveals the complex architecture of dynactin's shoulder region and pointed end.</title>
        <authorList>
            <person name="Lau C.K."/>
            <person name="O'Reilly F.J."/>
            <person name="Santhanam B."/>
            <person name="Lacey S.E."/>
            <person name="Rappsilber J."/>
            <person name="Carter A.P."/>
        </authorList>
    </citation>
    <scope>STRUCTURE BY ELECTRON MICROSCOPY (3.80 ANGSTROMS)(ISOFORM 1)</scope>
    <scope>SUBUNIT</scope>
</reference>
<reference evidence="17 18" key="9">
    <citation type="journal article" date="2022" name="Nature">
        <title>Structure of dynein-dynactin on microtubules shows tandem adaptor binding.</title>
        <authorList>
            <person name="Chaaban S."/>
            <person name="Carter A.P."/>
        </authorList>
    </citation>
    <scope>STRUCTURE BY ELECTRON MICROSCOPY (3.30 ANGSTROMS)(ISOFORM 1)</scope>
</reference>
<proteinExistence type="evidence at protein level"/>
<organism>
    <name type="scientific">Sus scrofa</name>
    <name type="common">Pig</name>
    <dbReference type="NCBI Taxonomy" id="9823"/>
    <lineage>
        <taxon>Eukaryota</taxon>
        <taxon>Metazoa</taxon>
        <taxon>Chordata</taxon>
        <taxon>Craniata</taxon>
        <taxon>Vertebrata</taxon>
        <taxon>Euteleostomi</taxon>
        <taxon>Mammalia</taxon>
        <taxon>Eutheria</taxon>
        <taxon>Laurasiatheria</taxon>
        <taxon>Artiodactyla</taxon>
        <taxon>Suina</taxon>
        <taxon>Suidae</taxon>
        <taxon>Sus</taxon>
    </lineage>
</organism>
<name>CAPZB_PIG</name>
<sequence>MSDQQLDCALDLMRRLPPQQIEKNLSDLIDLVPSLCEDLLSSVDQPLKIARDKVVGKDYLLCDYNRDGDSYRSPWSNKYDPPLEDGAMPSARLRKLEVEANNAFDQYRDLYFEGGVSSVYLWDLDHGFAGVILIKKAGDGSKKIKGCWDSIHVVEVQEKSSGRTAHYKLTSTVMLWLQTNKSGSGTMNLGGSLTRQMEKDETVSDCSPHIANIGRLVEDMENKIRSTLNEIYFGKTKDIVNGLRSVQTFADKSKQEALKNDLVEALKRKQQC</sequence>
<keyword id="KW-0002">3D-structure</keyword>
<keyword id="KW-0007">Acetylation</keyword>
<keyword id="KW-0117">Actin capping</keyword>
<keyword id="KW-0009">Actin-binding</keyword>
<keyword id="KW-0025">Alternative splicing</keyword>
<keyword id="KW-0963">Cytoplasm</keyword>
<keyword id="KW-0206">Cytoskeleton</keyword>
<keyword id="KW-0597">Phosphoprotein</keyword>
<keyword id="KW-1185">Reference proteome</keyword>
<protein>
    <recommendedName>
        <fullName>F-actin-capping protein subunit beta</fullName>
    </recommendedName>
    <alternativeName>
        <fullName>CapZ beta</fullName>
    </alternativeName>
</protein>